<name>VIT_ACACF</name>
<proteinExistence type="evidence at transcript level"/>
<reference evidence="7" key="1">
    <citation type="journal article" date="2013" name="Genome Biol.">
        <title>Genome of Acanthamoeba castellanii highlights extensive lateral gene transfer and early evolution of tyrosine kinase signaling.</title>
        <authorList>
            <person name="Clarke M."/>
            <person name="Lohan A.J."/>
            <person name="Liu B."/>
            <person name="Lagkouvardos I."/>
            <person name="Roy S."/>
            <person name="Zafar N."/>
            <person name="Bertelli C."/>
            <person name="Schilde C."/>
            <person name="Kianianmomeni A."/>
            <person name="Burglin T.R."/>
            <person name="Frech C."/>
            <person name="Turcotte B."/>
            <person name="Kopec K.O."/>
            <person name="Synnott J.M."/>
            <person name="Choo C."/>
            <person name="Paponov I."/>
            <person name="Finkler A."/>
            <person name="Soon Heng Tan C."/>
            <person name="Hutchins A.P."/>
            <person name="Weinmeier T."/>
            <person name="Rattei T."/>
            <person name="Chu J.S."/>
            <person name="Gimenez G."/>
            <person name="Irimia M."/>
            <person name="Rigden D.J."/>
            <person name="Fitzpatrick D.A."/>
            <person name="Lorenzo-Morales J."/>
            <person name="Bateman A."/>
            <person name="Chiu C.H."/>
            <person name="Tang P."/>
            <person name="Hegemann P."/>
            <person name="Fromm H."/>
            <person name="Raoult D."/>
            <person name="Greub G."/>
            <person name="Miranda-Saavedra D."/>
            <person name="Chen N."/>
            <person name="Nash P."/>
            <person name="Ginger M.L."/>
            <person name="Horn M."/>
            <person name="Schaap P."/>
            <person name="Caler L."/>
            <person name="Loftus B."/>
        </authorList>
    </citation>
    <scope>NUCLEOTIDE SEQUENCE [LARGE SCALE GENOMIC DNA]</scope>
    <source>
        <strain evidence="7">ATCC 30010 / Neff</strain>
    </source>
</reference>
<reference evidence="5" key="2">
    <citation type="journal article" date="2022" name="Int. J. Parasitol.">
        <title>Elucidation of iron homeostasis in Acanthamoeba castellanii.</title>
        <authorList>
            <person name="Grechnikova M."/>
            <person name="Arbon D."/>
            <person name="Zeniskova K."/>
            <person name="Malych R."/>
            <person name="Mach J."/>
            <person name="Krejbichova L."/>
            <person name="Simackova A."/>
            <person name="Sutak R."/>
        </authorList>
    </citation>
    <scope>FUNCTION</scope>
    <scope>TRANSPORTER ACTIVITY</scope>
    <scope>SUBCELLULAR LOCATION</scope>
    <scope>INDUCTION</scope>
</reference>
<sequence length="261" mass="27839">MAEHTEETNLLQPTSRFQLLKDILGLYPAIDGEKHKSTLGTAGWLRAGVLGANDAIVSVAASNSQGQVLIAALAALFAGALSMAVGEYVSVASQKDMEDADLEKERWELENNPEGELEELSLLYQERGVDPVTATEVARQLMAKDALQAHAIEELGIRDFSQARPFAAGMVSFAMFITFGCIPLLVGAWIPYRWYAIGAITGVSLILLAISGAVGAFFGGANMLLGAFRVTYGGALAMAITIGVGFLSETLNISDMSYRDE</sequence>
<dbReference type="EMBL" id="KB008148">
    <property type="protein sequence ID" value="ELR11697.1"/>
    <property type="molecule type" value="Genomic_DNA"/>
</dbReference>
<dbReference type="RefSeq" id="XP_004333710.1">
    <property type="nucleotide sequence ID" value="XM_004333662.1"/>
</dbReference>
<dbReference type="SMR" id="L8GFE0"/>
<dbReference type="STRING" id="1257118.L8GFE0"/>
<dbReference type="EnsemblProtists" id="ELR11697">
    <property type="protein sequence ID" value="ELR11697"/>
    <property type="gene ID" value="ACA1_261050"/>
</dbReference>
<dbReference type="GeneID" id="14912142"/>
<dbReference type="KEGG" id="acan:ACA1_261050"/>
<dbReference type="VEuPathDB" id="AmoebaDB:ACA1_261050"/>
<dbReference type="OMA" id="YTKRSQW"/>
<dbReference type="OrthoDB" id="73465at2759"/>
<dbReference type="Proteomes" id="UP000011083">
    <property type="component" value="Unassembled WGS sequence"/>
</dbReference>
<dbReference type="GO" id="GO:0005774">
    <property type="term" value="C:vacuolar membrane"/>
    <property type="evidence" value="ECO:0007669"/>
    <property type="project" value="UniProtKB-SubCell"/>
</dbReference>
<dbReference type="GO" id="GO:0005384">
    <property type="term" value="F:manganese ion transmembrane transporter activity"/>
    <property type="evidence" value="ECO:0007669"/>
    <property type="project" value="InterPro"/>
</dbReference>
<dbReference type="GO" id="GO:0046872">
    <property type="term" value="F:metal ion binding"/>
    <property type="evidence" value="ECO:0007669"/>
    <property type="project" value="UniProtKB-KW"/>
</dbReference>
<dbReference type="GO" id="GO:0030026">
    <property type="term" value="P:intracellular manganese ion homeostasis"/>
    <property type="evidence" value="ECO:0007669"/>
    <property type="project" value="InterPro"/>
</dbReference>
<dbReference type="GO" id="GO:0006826">
    <property type="term" value="P:iron ion transport"/>
    <property type="evidence" value="ECO:0007669"/>
    <property type="project" value="UniProtKB-KW"/>
</dbReference>
<dbReference type="InterPro" id="IPR008217">
    <property type="entry name" value="Ccc1_fam"/>
</dbReference>
<dbReference type="PANTHER" id="PTHR31851">
    <property type="entry name" value="FE(2+)/MN(2+) TRANSPORTER PCL1"/>
    <property type="match status" value="1"/>
</dbReference>
<dbReference type="Pfam" id="PF01988">
    <property type="entry name" value="VIT1"/>
    <property type="match status" value="1"/>
</dbReference>
<organism>
    <name type="scientific">Acanthamoeba castellanii (strain ATCC 30010 / Neff)</name>
    <dbReference type="NCBI Taxonomy" id="1257118"/>
    <lineage>
        <taxon>Eukaryota</taxon>
        <taxon>Amoebozoa</taxon>
        <taxon>Discosea</taxon>
        <taxon>Longamoebia</taxon>
        <taxon>Centramoebida</taxon>
        <taxon>Acanthamoebidae</taxon>
        <taxon>Acanthamoeba</taxon>
    </lineage>
</organism>
<protein>
    <recommendedName>
        <fullName evidence="4">Vacuolar iron transporter</fullName>
        <shortName evidence="4">AcVIT</shortName>
    </recommendedName>
</protein>
<gene>
    <name evidence="5" type="primary">VIT</name>
    <name evidence="6" type="ORF">ACA1_261050</name>
</gene>
<keyword id="KW-0406">Ion transport</keyword>
<keyword id="KW-0408">Iron</keyword>
<keyword id="KW-0410">Iron transport</keyword>
<keyword id="KW-0472">Membrane</keyword>
<keyword id="KW-0479">Metal-binding</keyword>
<keyword id="KW-1185">Reference proteome</keyword>
<keyword id="KW-0812">Transmembrane</keyword>
<keyword id="KW-1133">Transmembrane helix</keyword>
<keyword id="KW-0813">Transport</keyword>
<keyword id="KW-0926">Vacuole</keyword>
<evidence type="ECO:0000250" key="1">
    <source>
        <dbReference type="UniProtKB" id="P0DO17"/>
    </source>
</evidence>
<evidence type="ECO:0000255" key="2"/>
<evidence type="ECO:0000269" key="3">
    <source>
    </source>
</evidence>
<evidence type="ECO:0000303" key="4">
    <source>
    </source>
</evidence>
<evidence type="ECO:0000305" key="5"/>
<evidence type="ECO:0000312" key="6">
    <source>
        <dbReference type="EMBL" id="ELR11697.1"/>
    </source>
</evidence>
<evidence type="ECO:0000312" key="7">
    <source>
        <dbReference type="Proteomes" id="UP000011083"/>
    </source>
</evidence>
<feature type="chain" id="PRO_0000459688" description="Vacuolar iron transporter">
    <location>
        <begin position="1"/>
        <end position="261"/>
    </location>
</feature>
<feature type="transmembrane region" description="Helical" evidence="2">
    <location>
        <begin position="66"/>
        <end position="86"/>
    </location>
</feature>
<feature type="transmembrane region" description="Helical" evidence="2">
    <location>
        <begin position="170"/>
        <end position="190"/>
    </location>
</feature>
<feature type="transmembrane region" description="Helical" evidence="2">
    <location>
        <begin position="197"/>
        <end position="217"/>
    </location>
</feature>
<feature type="transmembrane region" description="Helical" evidence="2">
    <location>
        <begin position="233"/>
        <end position="253"/>
    </location>
</feature>
<feature type="binding site" evidence="1">
    <location>
        <position position="105"/>
    </location>
    <ligand>
        <name>Fe cation</name>
        <dbReference type="ChEBI" id="CHEBI:24875"/>
        <label>1</label>
    </ligand>
</feature>
<feature type="binding site" evidence="1">
    <location>
        <position position="105"/>
    </location>
    <ligand>
        <name>Fe cation</name>
        <dbReference type="ChEBI" id="CHEBI:24875"/>
        <label>2</label>
    </ligand>
</feature>
<feature type="binding site" evidence="1">
    <location>
        <position position="108"/>
    </location>
    <ligand>
        <name>Fe cation</name>
        <dbReference type="ChEBI" id="CHEBI:24875"/>
        <label>1</label>
    </ligand>
</feature>
<feature type="binding site" evidence="1">
    <location>
        <position position="108"/>
    </location>
    <ligand>
        <name>Fe cation</name>
        <dbReference type="ChEBI" id="CHEBI:24875"/>
        <label>3</label>
    </ligand>
</feature>
<feature type="binding site" evidence="1">
    <location>
        <position position="116"/>
    </location>
    <ligand>
        <name>Fe cation</name>
        <dbReference type="ChEBI" id="CHEBI:24875"/>
        <label>1</label>
    </ligand>
</feature>
<feature type="binding site" evidence="1">
    <location>
        <position position="116"/>
    </location>
    <ligand>
        <name>Fe cation</name>
        <dbReference type="ChEBI" id="CHEBI:24875"/>
        <label>2</label>
    </ligand>
</feature>
<feature type="binding site" evidence="1">
    <location>
        <position position="116"/>
    </location>
    <ligand>
        <name>Fe cation</name>
        <dbReference type="ChEBI" id="CHEBI:24875"/>
        <label>3</label>
    </ligand>
</feature>
<feature type="binding site" evidence="1">
    <location>
        <position position="119"/>
    </location>
    <ligand>
        <name>Fe cation</name>
        <dbReference type="ChEBI" id="CHEBI:24875"/>
        <label>1</label>
    </ligand>
</feature>
<feature type="binding site" evidence="1">
    <location>
        <position position="119"/>
    </location>
    <ligand>
        <name>Fe cation</name>
        <dbReference type="ChEBI" id="CHEBI:24875"/>
        <label>2</label>
    </ligand>
</feature>
<feature type="binding site" evidence="1">
    <location>
        <position position="119"/>
    </location>
    <ligand>
        <name>Fe cation</name>
        <dbReference type="ChEBI" id="CHEBI:24875"/>
        <label>3</label>
    </ligand>
</feature>
<feature type="binding site" evidence="1">
    <location>
        <position position="154"/>
    </location>
    <ligand>
        <name>Fe cation</name>
        <dbReference type="ChEBI" id="CHEBI:24875"/>
        <label>1</label>
    </ligand>
</feature>
<accession>L8GFE0</accession>
<comment type="function">
    <text evidence="3">Vacuolar iron transporter involved in the transfer of iron ions from the cytosol to the vacuole for intracellular iron storage.</text>
</comment>
<comment type="catalytic activity">
    <reaction evidence="3">
        <text>Fe(2+)(in) = Fe(2+)(out)</text>
        <dbReference type="Rhea" id="RHEA:28486"/>
        <dbReference type="ChEBI" id="CHEBI:29033"/>
    </reaction>
    <physiologicalReaction direction="left-to-right" evidence="5">
        <dbReference type="Rhea" id="RHEA:28487"/>
    </physiologicalReaction>
</comment>
<comment type="subcellular location">
    <subcellularLocation>
        <location evidence="3">Vacuole membrane</location>
        <topology evidence="2">Multi-pass membrane protein</topology>
    </subcellularLocation>
</comment>
<comment type="induction">
    <text evidence="3">Down-regulated under low iron conditions.</text>
</comment>
<comment type="similarity">
    <text evidence="5">Belongs to the CCC1 family.</text>
</comment>